<feature type="chain" id="PRO_0000094224" description="Elongation factor P">
    <location>
        <begin position="1"/>
        <end position="188"/>
    </location>
</feature>
<comment type="function">
    <text evidence="1">Involved in peptide bond synthesis. Stimulates efficient translation and peptide-bond synthesis on native or reconstituted 70S ribosomes in vitro. Probably functions indirectly by altering the affinity of the ribosome for aminoacyl-tRNA, thus increasing their reactivity as acceptors for peptidyl transferase.</text>
</comment>
<comment type="pathway">
    <text evidence="1">Protein biosynthesis; polypeptide chain elongation.</text>
</comment>
<comment type="subcellular location">
    <subcellularLocation>
        <location evidence="1">Cytoplasm</location>
    </subcellularLocation>
</comment>
<comment type="similarity">
    <text evidence="1">Belongs to the elongation factor P family.</text>
</comment>
<gene>
    <name evidence="1" type="primary">efp</name>
    <name type="ordered locus">CC_0721</name>
</gene>
<reference key="1">
    <citation type="journal article" date="2001" name="Proc. Natl. Acad. Sci. U.S.A.">
        <title>Complete genome sequence of Caulobacter crescentus.</title>
        <authorList>
            <person name="Nierman W.C."/>
            <person name="Feldblyum T.V."/>
            <person name="Laub M.T."/>
            <person name="Paulsen I.T."/>
            <person name="Nelson K.E."/>
            <person name="Eisen J.A."/>
            <person name="Heidelberg J.F."/>
            <person name="Alley M.R.K."/>
            <person name="Ohta N."/>
            <person name="Maddock J.R."/>
            <person name="Potocka I."/>
            <person name="Nelson W.C."/>
            <person name="Newton A."/>
            <person name="Stephens C."/>
            <person name="Phadke N.D."/>
            <person name="Ely B."/>
            <person name="DeBoy R.T."/>
            <person name="Dodson R.J."/>
            <person name="Durkin A.S."/>
            <person name="Gwinn M.L."/>
            <person name="Haft D.H."/>
            <person name="Kolonay J.F."/>
            <person name="Smit J."/>
            <person name="Craven M.B."/>
            <person name="Khouri H.M."/>
            <person name="Shetty J."/>
            <person name="Berry K.J."/>
            <person name="Utterback T.R."/>
            <person name="Tran K."/>
            <person name="Wolf A.M."/>
            <person name="Vamathevan J.J."/>
            <person name="Ermolaeva M.D."/>
            <person name="White O."/>
            <person name="Salzberg S.L."/>
            <person name="Venter J.C."/>
            <person name="Shapiro L."/>
            <person name="Fraser C.M."/>
        </authorList>
    </citation>
    <scope>NUCLEOTIDE SEQUENCE [LARGE SCALE GENOMIC DNA]</scope>
    <source>
        <strain>ATCC 19089 / CIP 103742 / CB 15</strain>
    </source>
</reference>
<protein>
    <recommendedName>
        <fullName evidence="1">Elongation factor P</fullName>
        <shortName evidence="1">EF-P</shortName>
    </recommendedName>
</protein>
<organism>
    <name type="scientific">Caulobacter vibrioides (strain ATCC 19089 / CIP 103742 / CB 15)</name>
    <name type="common">Caulobacter crescentus</name>
    <dbReference type="NCBI Taxonomy" id="190650"/>
    <lineage>
        <taxon>Bacteria</taxon>
        <taxon>Pseudomonadati</taxon>
        <taxon>Pseudomonadota</taxon>
        <taxon>Alphaproteobacteria</taxon>
        <taxon>Caulobacterales</taxon>
        <taxon>Caulobacteraceae</taxon>
        <taxon>Caulobacter</taxon>
    </lineage>
</organism>
<dbReference type="EMBL" id="AE005673">
    <property type="protein sequence ID" value="AAK22706.1"/>
    <property type="molecule type" value="Genomic_DNA"/>
</dbReference>
<dbReference type="PIR" id="F87338">
    <property type="entry name" value="F87338"/>
</dbReference>
<dbReference type="RefSeq" id="NP_419538.1">
    <property type="nucleotide sequence ID" value="NC_002696.2"/>
</dbReference>
<dbReference type="RefSeq" id="WP_010918607.1">
    <property type="nucleotide sequence ID" value="NC_002696.2"/>
</dbReference>
<dbReference type="SMR" id="Q9AA85"/>
<dbReference type="STRING" id="190650.CC_0721"/>
<dbReference type="EnsemblBacteria" id="AAK22706">
    <property type="protein sequence ID" value="AAK22706"/>
    <property type="gene ID" value="CC_0721"/>
</dbReference>
<dbReference type="KEGG" id="ccr:CC_0721"/>
<dbReference type="PATRIC" id="fig|190650.5.peg.730"/>
<dbReference type="eggNOG" id="COG0231">
    <property type="taxonomic scope" value="Bacteria"/>
</dbReference>
<dbReference type="HOGENOM" id="CLU_074944_1_1_5"/>
<dbReference type="BioCyc" id="CAULO:CC0721-MONOMER"/>
<dbReference type="UniPathway" id="UPA00345"/>
<dbReference type="Proteomes" id="UP000001816">
    <property type="component" value="Chromosome"/>
</dbReference>
<dbReference type="GO" id="GO:0005737">
    <property type="term" value="C:cytoplasm"/>
    <property type="evidence" value="ECO:0007669"/>
    <property type="project" value="UniProtKB-SubCell"/>
</dbReference>
<dbReference type="GO" id="GO:0003746">
    <property type="term" value="F:translation elongation factor activity"/>
    <property type="evidence" value="ECO:0007669"/>
    <property type="project" value="UniProtKB-UniRule"/>
</dbReference>
<dbReference type="GO" id="GO:0043043">
    <property type="term" value="P:peptide biosynthetic process"/>
    <property type="evidence" value="ECO:0007669"/>
    <property type="project" value="InterPro"/>
</dbReference>
<dbReference type="CDD" id="cd04470">
    <property type="entry name" value="S1_EF-P_repeat_1"/>
    <property type="match status" value="1"/>
</dbReference>
<dbReference type="CDD" id="cd05794">
    <property type="entry name" value="S1_EF-P_repeat_2"/>
    <property type="match status" value="1"/>
</dbReference>
<dbReference type="FunFam" id="2.40.50.140:FF:000004">
    <property type="entry name" value="Elongation factor P"/>
    <property type="match status" value="1"/>
</dbReference>
<dbReference type="FunFam" id="2.40.50.140:FF:000009">
    <property type="entry name" value="Elongation factor P"/>
    <property type="match status" value="1"/>
</dbReference>
<dbReference type="Gene3D" id="2.30.30.30">
    <property type="match status" value="1"/>
</dbReference>
<dbReference type="Gene3D" id="2.40.50.140">
    <property type="entry name" value="Nucleic acid-binding proteins"/>
    <property type="match status" value="2"/>
</dbReference>
<dbReference type="HAMAP" id="MF_00141">
    <property type="entry name" value="EF_P"/>
    <property type="match status" value="1"/>
</dbReference>
<dbReference type="InterPro" id="IPR015365">
    <property type="entry name" value="Elong-fact-P_C"/>
</dbReference>
<dbReference type="InterPro" id="IPR012340">
    <property type="entry name" value="NA-bd_OB-fold"/>
</dbReference>
<dbReference type="InterPro" id="IPR014722">
    <property type="entry name" value="Rib_uL2_dom2"/>
</dbReference>
<dbReference type="InterPro" id="IPR020599">
    <property type="entry name" value="Transl_elong_fac_P/YeiP"/>
</dbReference>
<dbReference type="InterPro" id="IPR013185">
    <property type="entry name" value="Transl_elong_KOW-like"/>
</dbReference>
<dbReference type="InterPro" id="IPR001059">
    <property type="entry name" value="Transl_elong_P/YeiP_cen"/>
</dbReference>
<dbReference type="InterPro" id="IPR013852">
    <property type="entry name" value="Transl_elong_P/YeiP_CS"/>
</dbReference>
<dbReference type="InterPro" id="IPR011768">
    <property type="entry name" value="Transl_elongation_fac_P"/>
</dbReference>
<dbReference type="InterPro" id="IPR008991">
    <property type="entry name" value="Translation_prot_SH3-like_sf"/>
</dbReference>
<dbReference type="NCBIfam" id="TIGR00038">
    <property type="entry name" value="efp"/>
    <property type="match status" value="1"/>
</dbReference>
<dbReference type="NCBIfam" id="NF001810">
    <property type="entry name" value="PRK00529.1"/>
    <property type="match status" value="1"/>
</dbReference>
<dbReference type="PANTHER" id="PTHR30053">
    <property type="entry name" value="ELONGATION FACTOR P"/>
    <property type="match status" value="1"/>
</dbReference>
<dbReference type="PANTHER" id="PTHR30053:SF14">
    <property type="entry name" value="TRANSLATION ELONGATION FACTOR KOW-LIKE DOMAIN-CONTAINING PROTEIN"/>
    <property type="match status" value="1"/>
</dbReference>
<dbReference type="Pfam" id="PF01132">
    <property type="entry name" value="EFP"/>
    <property type="match status" value="1"/>
</dbReference>
<dbReference type="Pfam" id="PF08207">
    <property type="entry name" value="EFP_N"/>
    <property type="match status" value="1"/>
</dbReference>
<dbReference type="Pfam" id="PF09285">
    <property type="entry name" value="Elong-fact-P_C"/>
    <property type="match status" value="1"/>
</dbReference>
<dbReference type="PIRSF" id="PIRSF005901">
    <property type="entry name" value="EF-P"/>
    <property type="match status" value="1"/>
</dbReference>
<dbReference type="SMART" id="SM01185">
    <property type="entry name" value="EFP"/>
    <property type="match status" value="1"/>
</dbReference>
<dbReference type="SMART" id="SM00841">
    <property type="entry name" value="Elong-fact-P_C"/>
    <property type="match status" value="1"/>
</dbReference>
<dbReference type="SUPFAM" id="SSF50249">
    <property type="entry name" value="Nucleic acid-binding proteins"/>
    <property type="match status" value="2"/>
</dbReference>
<dbReference type="SUPFAM" id="SSF50104">
    <property type="entry name" value="Translation proteins SH3-like domain"/>
    <property type="match status" value="1"/>
</dbReference>
<dbReference type="PROSITE" id="PS01275">
    <property type="entry name" value="EFP"/>
    <property type="match status" value="1"/>
</dbReference>
<sequence length="188" mass="20537">MKVAASSLRKGSVVDMDGKLYVVLSAENIHPGKGTPVTQLNMRRISDGVKVSERYRTTEQVERAFVDDRNHTFLYSDGDGYHFMNPESYDQLVATEDVIGDAAPYLQEGMTVILSTHNDVPIAIDLPRTVVLEIVDTEPSVKGQTASSSYKPAVLSNGVKTTVPPYITAGTKVVILTEDGSYVERAKD</sequence>
<proteinExistence type="inferred from homology"/>
<accession>Q9AA85</accession>
<keyword id="KW-0963">Cytoplasm</keyword>
<keyword id="KW-0251">Elongation factor</keyword>
<keyword id="KW-0648">Protein biosynthesis</keyword>
<keyword id="KW-1185">Reference proteome</keyword>
<name>EFP_CAUVC</name>
<evidence type="ECO:0000255" key="1">
    <source>
        <dbReference type="HAMAP-Rule" id="MF_00141"/>
    </source>
</evidence>